<feature type="chain" id="PRO_1000128078" description="Small ribosomal subunit protein uS9">
    <location>
        <begin position="1"/>
        <end position="128"/>
    </location>
</feature>
<feature type="region of interest" description="Disordered" evidence="2">
    <location>
        <begin position="97"/>
        <end position="128"/>
    </location>
</feature>
<feature type="compositionally biased region" description="Basic and acidic residues" evidence="2">
    <location>
        <begin position="97"/>
        <end position="113"/>
    </location>
</feature>
<feature type="compositionally biased region" description="Basic residues" evidence="2">
    <location>
        <begin position="114"/>
        <end position="128"/>
    </location>
</feature>
<keyword id="KW-0687">Ribonucleoprotein</keyword>
<keyword id="KW-0689">Ribosomal protein</keyword>
<proteinExistence type="inferred from homology"/>
<dbReference type="EMBL" id="CR626927">
    <property type="protein sequence ID" value="CAH09466.1"/>
    <property type="molecule type" value="Genomic_DNA"/>
</dbReference>
<dbReference type="RefSeq" id="WP_005791749.1">
    <property type="nucleotide sequence ID" value="NZ_UFTH01000001.1"/>
</dbReference>
<dbReference type="SMR" id="Q5L8W6"/>
<dbReference type="PaxDb" id="272559-BF9343_3685"/>
<dbReference type="GeneID" id="60365720"/>
<dbReference type="KEGG" id="bfs:BF9343_3685"/>
<dbReference type="eggNOG" id="COG0103">
    <property type="taxonomic scope" value="Bacteria"/>
</dbReference>
<dbReference type="HOGENOM" id="CLU_046483_2_1_10"/>
<dbReference type="Proteomes" id="UP000006731">
    <property type="component" value="Chromosome"/>
</dbReference>
<dbReference type="GO" id="GO:0022627">
    <property type="term" value="C:cytosolic small ribosomal subunit"/>
    <property type="evidence" value="ECO:0007669"/>
    <property type="project" value="TreeGrafter"/>
</dbReference>
<dbReference type="GO" id="GO:0003723">
    <property type="term" value="F:RNA binding"/>
    <property type="evidence" value="ECO:0007669"/>
    <property type="project" value="TreeGrafter"/>
</dbReference>
<dbReference type="GO" id="GO:0003735">
    <property type="term" value="F:structural constituent of ribosome"/>
    <property type="evidence" value="ECO:0007669"/>
    <property type="project" value="InterPro"/>
</dbReference>
<dbReference type="GO" id="GO:0006412">
    <property type="term" value="P:translation"/>
    <property type="evidence" value="ECO:0007669"/>
    <property type="project" value="UniProtKB-UniRule"/>
</dbReference>
<dbReference type="FunFam" id="3.30.230.10:FF:000001">
    <property type="entry name" value="30S ribosomal protein S9"/>
    <property type="match status" value="1"/>
</dbReference>
<dbReference type="Gene3D" id="3.30.230.10">
    <property type="match status" value="1"/>
</dbReference>
<dbReference type="HAMAP" id="MF_00532_B">
    <property type="entry name" value="Ribosomal_uS9_B"/>
    <property type="match status" value="1"/>
</dbReference>
<dbReference type="InterPro" id="IPR020568">
    <property type="entry name" value="Ribosomal_Su5_D2-typ_SF"/>
</dbReference>
<dbReference type="InterPro" id="IPR000754">
    <property type="entry name" value="Ribosomal_uS9"/>
</dbReference>
<dbReference type="InterPro" id="IPR023035">
    <property type="entry name" value="Ribosomal_uS9_bac/plastid"/>
</dbReference>
<dbReference type="InterPro" id="IPR020574">
    <property type="entry name" value="Ribosomal_uS9_CS"/>
</dbReference>
<dbReference type="InterPro" id="IPR014721">
    <property type="entry name" value="Ribsml_uS5_D2-typ_fold_subgr"/>
</dbReference>
<dbReference type="NCBIfam" id="NF001099">
    <property type="entry name" value="PRK00132.1"/>
    <property type="match status" value="1"/>
</dbReference>
<dbReference type="PANTHER" id="PTHR21569">
    <property type="entry name" value="RIBOSOMAL PROTEIN S9"/>
    <property type="match status" value="1"/>
</dbReference>
<dbReference type="PANTHER" id="PTHR21569:SF1">
    <property type="entry name" value="SMALL RIBOSOMAL SUBUNIT PROTEIN US9M"/>
    <property type="match status" value="1"/>
</dbReference>
<dbReference type="Pfam" id="PF00380">
    <property type="entry name" value="Ribosomal_S9"/>
    <property type="match status" value="1"/>
</dbReference>
<dbReference type="SUPFAM" id="SSF54211">
    <property type="entry name" value="Ribosomal protein S5 domain 2-like"/>
    <property type="match status" value="1"/>
</dbReference>
<dbReference type="PROSITE" id="PS00360">
    <property type="entry name" value="RIBOSOMAL_S9"/>
    <property type="match status" value="1"/>
</dbReference>
<gene>
    <name evidence="1" type="primary">rpsI</name>
    <name type="ordered locus">BF3786</name>
</gene>
<protein>
    <recommendedName>
        <fullName evidence="1">Small ribosomal subunit protein uS9</fullName>
    </recommendedName>
    <alternativeName>
        <fullName evidence="3">30S ribosomal protein S9</fullName>
    </alternativeName>
</protein>
<evidence type="ECO:0000255" key="1">
    <source>
        <dbReference type="HAMAP-Rule" id="MF_00532"/>
    </source>
</evidence>
<evidence type="ECO:0000256" key="2">
    <source>
        <dbReference type="SAM" id="MobiDB-lite"/>
    </source>
</evidence>
<evidence type="ECO:0000305" key="3"/>
<organism>
    <name type="scientific">Bacteroides fragilis (strain ATCC 25285 / DSM 2151 / CCUG 4856 / JCM 11019 / LMG 10263 / NCTC 9343 / Onslow / VPI 2553 / EN-2)</name>
    <dbReference type="NCBI Taxonomy" id="272559"/>
    <lineage>
        <taxon>Bacteria</taxon>
        <taxon>Pseudomonadati</taxon>
        <taxon>Bacteroidota</taxon>
        <taxon>Bacteroidia</taxon>
        <taxon>Bacteroidales</taxon>
        <taxon>Bacteroidaceae</taxon>
        <taxon>Bacteroides</taxon>
    </lineage>
</organism>
<name>RS9_BACFN</name>
<accession>Q5L8W6</accession>
<comment type="similarity">
    <text evidence="1">Belongs to the universal ribosomal protein uS9 family.</text>
</comment>
<reference key="1">
    <citation type="journal article" date="2005" name="Science">
        <title>Extensive DNA inversions in the B. fragilis genome control variable gene expression.</title>
        <authorList>
            <person name="Cerdeno-Tarraga A.-M."/>
            <person name="Patrick S."/>
            <person name="Crossman L.C."/>
            <person name="Blakely G."/>
            <person name="Abratt V."/>
            <person name="Lennard N."/>
            <person name="Poxton I."/>
            <person name="Duerden B."/>
            <person name="Harris B."/>
            <person name="Quail M.A."/>
            <person name="Barron A."/>
            <person name="Clark L."/>
            <person name="Corton C."/>
            <person name="Doggett J."/>
            <person name="Holden M.T.G."/>
            <person name="Larke N."/>
            <person name="Line A."/>
            <person name="Lord A."/>
            <person name="Norbertczak H."/>
            <person name="Ormond D."/>
            <person name="Price C."/>
            <person name="Rabbinowitsch E."/>
            <person name="Woodward J."/>
            <person name="Barrell B.G."/>
            <person name="Parkhill J."/>
        </authorList>
    </citation>
    <scope>NUCLEOTIDE SEQUENCE [LARGE SCALE GENOMIC DNA]</scope>
    <source>
        <strain>ATCC 25285 / DSM 2151 / CCUG 4856 / JCM 11019 / LMG 10263 / NCTC 9343 / Onslow / VPI 2553 / EN-2</strain>
    </source>
</reference>
<sequence>MEVVNALGRRKRAIARVFVSEGTGKITINKRDLAEYFPSTILQYVVKQPLNKLGVAEKYDIKVNLCGGGFTGQSQALRLAIARALVKINAEDKPALRSEGFMTRDPRSVERKKPGQPKARRRFQFSKR</sequence>